<reference key="1">
    <citation type="journal article" date="2004" name="Proc. Natl. Acad. Sci. U.S.A.">
        <title>Structural flexibility in the Burkholderia mallei genome.</title>
        <authorList>
            <person name="Nierman W.C."/>
            <person name="DeShazer D."/>
            <person name="Kim H.S."/>
            <person name="Tettelin H."/>
            <person name="Nelson K.E."/>
            <person name="Feldblyum T.V."/>
            <person name="Ulrich R.L."/>
            <person name="Ronning C.M."/>
            <person name="Brinkac L.M."/>
            <person name="Daugherty S.C."/>
            <person name="Davidsen T.D."/>
            <person name="DeBoy R.T."/>
            <person name="Dimitrov G."/>
            <person name="Dodson R.J."/>
            <person name="Durkin A.S."/>
            <person name="Gwinn M.L."/>
            <person name="Haft D.H."/>
            <person name="Khouri H.M."/>
            <person name="Kolonay J.F."/>
            <person name="Madupu R."/>
            <person name="Mohammoud Y."/>
            <person name="Nelson W.C."/>
            <person name="Radune D."/>
            <person name="Romero C.M."/>
            <person name="Sarria S."/>
            <person name="Selengut J."/>
            <person name="Shamblin C."/>
            <person name="Sullivan S.A."/>
            <person name="White O."/>
            <person name="Yu Y."/>
            <person name="Zafar N."/>
            <person name="Zhou L."/>
            <person name="Fraser C.M."/>
        </authorList>
    </citation>
    <scope>NUCLEOTIDE SEQUENCE [LARGE SCALE GENOMIC DNA]</scope>
    <source>
        <strain>ATCC 23344</strain>
    </source>
</reference>
<feature type="chain" id="PRO_0000119529" description="Glutamate--tRNA ligase">
    <location>
        <begin position="1"/>
        <end position="469"/>
    </location>
</feature>
<feature type="region of interest" description="Disordered" evidence="2">
    <location>
        <begin position="118"/>
        <end position="139"/>
    </location>
</feature>
<feature type="short sequence motif" description="'HIGH' region" evidence="1">
    <location>
        <begin position="11"/>
        <end position="21"/>
    </location>
</feature>
<feature type="short sequence motif" description="'KMSKS' region" evidence="1">
    <location>
        <begin position="243"/>
        <end position="247"/>
    </location>
</feature>
<feature type="compositionally biased region" description="Basic and acidic residues" evidence="2">
    <location>
        <begin position="118"/>
        <end position="131"/>
    </location>
</feature>
<feature type="binding site" evidence="1">
    <location>
        <position position="246"/>
    </location>
    <ligand>
        <name>ATP</name>
        <dbReference type="ChEBI" id="CHEBI:30616"/>
    </ligand>
</feature>
<organism>
    <name type="scientific">Burkholderia mallei (strain ATCC 23344)</name>
    <dbReference type="NCBI Taxonomy" id="243160"/>
    <lineage>
        <taxon>Bacteria</taxon>
        <taxon>Pseudomonadati</taxon>
        <taxon>Pseudomonadota</taxon>
        <taxon>Betaproteobacteria</taxon>
        <taxon>Burkholderiales</taxon>
        <taxon>Burkholderiaceae</taxon>
        <taxon>Burkholderia</taxon>
        <taxon>pseudomallei group</taxon>
    </lineage>
</organism>
<proteinExistence type="inferred from homology"/>
<accession>Q62J82</accession>
<protein>
    <recommendedName>
        <fullName evidence="1">Glutamate--tRNA ligase</fullName>
        <ecNumber evidence="1">6.1.1.17</ecNumber>
    </recommendedName>
    <alternativeName>
        <fullName evidence="1">Glutamyl-tRNA synthetase</fullName>
        <shortName evidence="1">GluRS</shortName>
    </alternativeName>
</protein>
<evidence type="ECO:0000255" key="1">
    <source>
        <dbReference type="HAMAP-Rule" id="MF_00022"/>
    </source>
</evidence>
<evidence type="ECO:0000256" key="2">
    <source>
        <dbReference type="SAM" id="MobiDB-lite"/>
    </source>
</evidence>
<dbReference type="EC" id="6.1.1.17" evidence="1"/>
<dbReference type="EMBL" id="CP000010">
    <property type="protein sequence ID" value="AAU48138.1"/>
    <property type="molecule type" value="Genomic_DNA"/>
</dbReference>
<dbReference type="RefSeq" id="WP_004197094.1">
    <property type="nucleotide sequence ID" value="NC_006348.1"/>
</dbReference>
<dbReference type="RefSeq" id="YP_103237.1">
    <property type="nucleotide sequence ID" value="NC_006348.1"/>
</dbReference>
<dbReference type="SMR" id="Q62J82"/>
<dbReference type="GeneID" id="92979324"/>
<dbReference type="KEGG" id="bma:BMA1600"/>
<dbReference type="PATRIC" id="fig|243160.12.peg.1642"/>
<dbReference type="eggNOG" id="COG0008">
    <property type="taxonomic scope" value="Bacteria"/>
</dbReference>
<dbReference type="HOGENOM" id="CLU_015768_6_0_4"/>
<dbReference type="Proteomes" id="UP000006693">
    <property type="component" value="Chromosome 1"/>
</dbReference>
<dbReference type="GO" id="GO:0005829">
    <property type="term" value="C:cytosol"/>
    <property type="evidence" value="ECO:0007669"/>
    <property type="project" value="TreeGrafter"/>
</dbReference>
<dbReference type="GO" id="GO:0005524">
    <property type="term" value="F:ATP binding"/>
    <property type="evidence" value="ECO:0007669"/>
    <property type="project" value="UniProtKB-UniRule"/>
</dbReference>
<dbReference type="GO" id="GO:0004818">
    <property type="term" value="F:glutamate-tRNA ligase activity"/>
    <property type="evidence" value="ECO:0007669"/>
    <property type="project" value="UniProtKB-UniRule"/>
</dbReference>
<dbReference type="GO" id="GO:0000049">
    <property type="term" value="F:tRNA binding"/>
    <property type="evidence" value="ECO:0007669"/>
    <property type="project" value="InterPro"/>
</dbReference>
<dbReference type="GO" id="GO:0008270">
    <property type="term" value="F:zinc ion binding"/>
    <property type="evidence" value="ECO:0007669"/>
    <property type="project" value="InterPro"/>
</dbReference>
<dbReference type="GO" id="GO:0006424">
    <property type="term" value="P:glutamyl-tRNA aminoacylation"/>
    <property type="evidence" value="ECO:0007669"/>
    <property type="project" value="UniProtKB-UniRule"/>
</dbReference>
<dbReference type="CDD" id="cd00808">
    <property type="entry name" value="GluRS_core"/>
    <property type="match status" value="1"/>
</dbReference>
<dbReference type="FunFam" id="3.40.50.620:FF:000007">
    <property type="entry name" value="Glutamate--tRNA ligase"/>
    <property type="match status" value="1"/>
</dbReference>
<dbReference type="Gene3D" id="1.10.10.350">
    <property type="match status" value="1"/>
</dbReference>
<dbReference type="Gene3D" id="1.10.8.70">
    <property type="entry name" value="Glutamate-tRNA synthetase, class I, anticodon-binding domain 1"/>
    <property type="match status" value="1"/>
</dbReference>
<dbReference type="Gene3D" id="3.40.50.620">
    <property type="entry name" value="HUPs"/>
    <property type="match status" value="1"/>
</dbReference>
<dbReference type="HAMAP" id="MF_00022">
    <property type="entry name" value="Glu_tRNA_synth_type1"/>
    <property type="match status" value="1"/>
</dbReference>
<dbReference type="InterPro" id="IPR045462">
    <property type="entry name" value="aa-tRNA-synth_I_cd-bd"/>
</dbReference>
<dbReference type="InterPro" id="IPR020751">
    <property type="entry name" value="aa-tRNA-synth_I_codon-bd_sub2"/>
</dbReference>
<dbReference type="InterPro" id="IPR001412">
    <property type="entry name" value="aa-tRNA-synth_I_CS"/>
</dbReference>
<dbReference type="InterPro" id="IPR008925">
    <property type="entry name" value="aa_tRNA-synth_I_cd-bd_sf"/>
</dbReference>
<dbReference type="InterPro" id="IPR004527">
    <property type="entry name" value="Glu-tRNA-ligase_bac/mito"/>
</dbReference>
<dbReference type="InterPro" id="IPR020752">
    <property type="entry name" value="Glu-tRNA-synth_I_codon-bd_sub1"/>
</dbReference>
<dbReference type="InterPro" id="IPR000924">
    <property type="entry name" value="Glu/Gln-tRNA-synth"/>
</dbReference>
<dbReference type="InterPro" id="IPR020058">
    <property type="entry name" value="Glu/Gln-tRNA-synth_Ib_cat-dom"/>
</dbReference>
<dbReference type="InterPro" id="IPR049940">
    <property type="entry name" value="GluQ/Sye"/>
</dbReference>
<dbReference type="InterPro" id="IPR033910">
    <property type="entry name" value="GluRS_core"/>
</dbReference>
<dbReference type="InterPro" id="IPR014729">
    <property type="entry name" value="Rossmann-like_a/b/a_fold"/>
</dbReference>
<dbReference type="NCBIfam" id="TIGR00464">
    <property type="entry name" value="gltX_bact"/>
    <property type="match status" value="1"/>
</dbReference>
<dbReference type="PANTHER" id="PTHR43311">
    <property type="entry name" value="GLUTAMATE--TRNA LIGASE"/>
    <property type="match status" value="1"/>
</dbReference>
<dbReference type="PANTHER" id="PTHR43311:SF2">
    <property type="entry name" value="GLUTAMATE--TRNA LIGASE, MITOCHONDRIAL-RELATED"/>
    <property type="match status" value="1"/>
</dbReference>
<dbReference type="Pfam" id="PF19269">
    <property type="entry name" value="Anticodon_2"/>
    <property type="match status" value="1"/>
</dbReference>
<dbReference type="Pfam" id="PF00749">
    <property type="entry name" value="tRNA-synt_1c"/>
    <property type="match status" value="1"/>
</dbReference>
<dbReference type="PRINTS" id="PR00987">
    <property type="entry name" value="TRNASYNTHGLU"/>
</dbReference>
<dbReference type="SUPFAM" id="SSF48163">
    <property type="entry name" value="An anticodon-binding domain of class I aminoacyl-tRNA synthetases"/>
    <property type="match status" value="1"/>
</dbReference>
<dbReference type="SUPFAM" id="SSF52374">
    <property type="entry name" value="Nucleotidylyl transferase"/>
    <property type="match status" value="1"/>
</dbReference>
<dbReference type="PROSITE" id="PS00178">
    <property type="entry name" value="AA_TRNA_LIGASE_I"/>
    <property type="match status" value="1"/>
</dbReference>
<sequence length="469" mass="52193">MTRPVRTRFAPSPTGFIHLGNIRSALYPWAFARKMKGTFVLRIEDTDLERSTEASVDAILEGMAWLGLDYDEGPYYQMQRMDRYREVLAQMLEKDLVYPCYMSTEELDALRERQRAAGEKPRYDGTWRPEPGKVLPEPPAGVTPVLRFRNPLTGSVVWDDAVKGRVEISNEELDDLVIARPDGTPTYNFCVVVDDLDMGITHVIRGDDHVNNTPRQINILRALGGEVPVYAHLPTVLNEQGEKMSKRHGAMSVMGYRDAGYLPEAVLNYLARLGWSHGDAEIFSREQFVEWFDLEHLGKSPAQYDHNKLNWLNNHYIKEADDARLAELAKPFFAALGIDADTIARGPDLVGVMGLMKDRASTVKEIAENSTMFYRSPAPDAQALAQHVTDAVRPALAEFAAALKTAEWTKEAIAAALKAVLGAHKLKMPQLAMPVRLLVAGTTHTPSIDAVLLLFGRDVVVSRLAAALA</sequence>
<comment type="function">
    <text evidence="1">Catalyzes the attachment of glutamate to tRNA(Glu) in a two-step reaction: glutamate is first activated by ATP to form Glu-AMP and then transferred to the acceptor end of tRNA(Glu).</text>
</comment>
<comment type="catalytic activity">
    <reaction evidence="1">
        <text>tRNA(Glu) + L-glutamate + ATP = L-glutamyl-tRNA(Glu) + AMP + diphosphate</text>
        <dbReference type="Rhea" id="RHEA:23540"/>
        <dbReference type="Rhea" id="RHEA-COMP:9663"/>
        <dbReference type="Rhea" id="RHEA-COMP:9680"/>
        <dbReference type="ChEBI" id="CHEBI:29985"/>
        <dbReference type="ChEBI" id="CHEBI:30616"/>
        <dbReference type="ChEBI" id="CHEBI:33019"/>
        <dbReference type="ChEBI" id="CHEBI:78442"/>
        <dbReference type="ChEBI" id="CHEBI:78520"/>
        <dbReference type="ChEBI" id="CHEBI:456215"/>
        <dbReference type="EC" id="6.1.1.17"/>
    </reaction>
</comment>
<comment type="subunit">
    <text evidence="1">Monomer.</text>
</comment>
<comment type="subcellular location">
    <subcellularLocation>
        <location evidence="1">Cytoplasm</location>
    </subcellularLocation>
</comment>
<comment type="similarity">
    <text evidence="1">Belongs to the class-I aminoacyl-tRNA synthetase family. Glutamate--tRNA ligase type 1 subfamily.</text>
</comment>
<keyword id="KW-0030">Aminoacyl-tRNA synthetase</keyword>
<keyword id="KW-0067">ATP-binding</keyword>
<keyword id="KW-0963">Cytoplasm</keyword>
<keyword id="KW-0436">Ligase</keyword>
<keyword id="KW-0547">Nucleotide-binding</keyword>
<keyword id="KW-0648">Protein biosynthesis</keyword>
<keyword id="KW-1185">Reference proteome</keyword>
<gene>
    <name evidence="1" type="primary">gltX</name>
    <name type="ordered locus">BMA1600</name>
</gene>
<name>SYE_BURMA</name>